<organismHost>
    <name type="scientific">Bos indicus</name>
    <name type="common">Zebu</name>
    <dbReference type="NCBI Taxonomy" id="9915"/>
</organismHost>
<organismHost>
    <name type="scientific">Bos taurus</name>
    <name type="common">Bovine</name>
    <dbReference type="NCBI Taxonomy" id="9913"/>
</organismHost>
<organismHost>
    <name type="scientific">Bubalus bubalis</name>
    <name type="common">Domestic water buffalo</name>
    <dbReference type="NCBI Taxonomy" id="89462"/>
</organismHost>
<organismHost>
    <name type="scientific">Capra hircus</name>
    <name type="common">Goat</name>
    <dbReference type="NCBI Taxonomy" id="9925"/>
</organismHost>
<organismHost>
    <name type="scientific">Gazella</name>
    <name type="common">gazelles</name>
    <dbReference type="NCBI Taxonomy" id="9933"/>
</organismHost>
<organismHost>
    <name type="scientific">Giraffa camelopardalis</name>
    <name type="common">Giraffe</name>
    <dbReference type="NCBI Taxonomy" id="9894"/>
</organismHost>
<organismHost>
    <name type="scientific">Hippopotamus</name>
    <dbReference type="NCBI Taxonomy" id="9832"/>
</organismHost>
<organismHost>
    <name type="scientific">Ovis aries</name>
    <name type="common">Sheep</name>
    <dbReference type="NCBI Taxonomy" id="9940"/>
</organismHost>
<organismHost>
    <name type="scientific">Suidae</name>
    <name type="common">pigs</name>
    <dbReference type="NCBI Taxonomy" id="9821"/>
</organismHost>
<keyword id="KW-0165">Cleavage on pair of basic residues</keyword>
<keyword id="KW-0175">Coiled coil</keyword>
<keyword id="KW-1015">Disulfide bond</keyword>
<keyword id="KW-1169">Fusion of virus membrane with host cell membrane</keyword>
<keyword id="KW-1168">Fusion of virus membrane with host membrane</keyword>
<keyword id="KW-0325">Glycoprotein</keyword>
<keyword id="KW-1032">Host cell membrane</keyword>
<keyword id="KW-1043">Host membrane</keyword>
<keyword id="KW-0472">Membrane</keyword>
<keyword id="KW-0732">Signal</keyword>
<keyword id="KW-0812">Transmembrane</keyword>
<keyword id="KW-1133">Transmembrane helix</keyword>
<keyword id="KW-0261">Viral envelope protein</keyword>
<keyword id="KW-1162">Viral penetration into host cytoplasm</keyword>
<keyword id="KW-0946">Virion</keyword>
<keyword id="KW-1160">Virus entry into host cell</keyword>
<dbReference type="EMBL" id="M20870">
    <property type="protein sequence ID" value="AAA47399.1"/>
    <property type="molecule type" value="Genomic_RNA"/>
</dbReference>
<dbReference type="PIR" id="A28921">
    <property type="entry name" value="VGNZRL"/>
</dbReference>
<dbReference type="SMR" id="P10864"/>
<dbReference type="GlyCosmos" id="P10864">
    <property type="glycosylation" value="3 sites, No reported glycans"/>
</dbReference>
<dbReference type="GO" id="GO:0020002">
    <property type="term" value="C:host cell plasma membrane"/>
    <property type="evidence" value="ECO:0007669"/>
    <property type="project" value="UniProtKB-SubCell"/>
</dbReference>
<dbReference type="GO" id="GO:0016020">
    <property type="term" value="C:membrane"/>
    <property type="evidence" value="ECO:0007669"/>
    <property type="project" value="UniProtKB-KW"/>
</dbReference>
<dbReference type="GO" id="GO:0019031">
    <property type="term" value="C:viral envelope"/>
    <property type="evidence" value="ECO:0007669"/>
    <property type="project" value="UniProtKB-KW"/>
</dbReference>
<dbReference type="GO" id="GO:0055036">
    <property type="term" value="C:virion membrane"/>
    <property type="evidence" value="ECO:0007669"/>
    <property type="project" value="UniProtKB-SubCell"/>
</dbReference>
<dbReference type="GO" id="GO:0019064">
    <property type="term" value="P:fusion of virus membrane with host plasma membrane"/>
    <property type="evidence" value="ECO:0007669"/>
    <property type="project" value="UniProtKB-KW"/>
</dbReference>
<dbReference type="GO" id="GO:0046718">
    <property type="term" value="P:symbiont entry into host cell"/>
    <property type="evidence" value="ECO:0007669"/>
    <property type="project" value="UniProtKB-KW"/>
</dbReference>
<dbReference type="Gene3D" id="1.10.287.2480">
    <property type="match status" value="1"/>
</dbReference>
<dbReference type="Gene3D" id="6.10.10.110">
    <property type="match status" value="1"/>
</dbReference>
<dbReference type="Gene3D" id="2.60.40.1690">
    <property type="entry name" value="Head and neck region of the ectodomain of NDV fusion glycoprotein"/>
    <property type="match status" value="1"/>
</dbReference>
<dbReference type="Gene3D" id="2.40.490.10">
    <property type="entry name" value="Newcastle disease virus like domain"/>
    <property type="match status" value="1"/>
</dbReference>
<dbReference type="InterPro" id="IPR000776">
    <property type="entry name" value="Fusion_F0_Paramyxovir"/>
</dbReference>
<dbReference type="Pfam" id="PF00523">
    <property type="entry name" value="Fusion_gly"/>
    <property type="match status" value="1"/>
</dbReference>
<dbReference type="SUPFAM" id="SSF69922">
    <property type="entry name" value="Head and neck region of the ectodomain of NDV fusion glycoprotein"/>
    <property type="match status" value="1"/>
</dbReference>
<dbReference type="SUPFAM" id="SSF58069">
    <property type="entry name" value="Virus ectodomain"/>
    <property type="match status" value="1"/>
</dbReference>
<gene>
    <name type="primary">F</name>
</gene>
<organism>
    <name type="scientific">Rinderpest virus (strain L)</name>
    <name type="common">RDV</name>
    <dbReference type="NCBI Taxonomy" id="11243"/>
    <lineage>
        <taxon>Viruses</taxon>
        <taxon>Riboviria</taxon>
        <taxon>Orthornavirae</taxon>
        <taxon>Negarnaviricota</taxon>
        <taxon>Haploviricotina</taxon>
        <taxon>Monjiviricetes</taxon>
        <taxon>Mononegavirales</taxon>
        <taxon>Paramyxoviridae</taxon>
        <taxon>Orthoparamyxovirinae</taxon>
        <taxon>Morbillivirus</taxon>
        <taxon>Morbillivirus pecoris</taxon>
        <taxon>Rinderpest morbillivirus</taxon>
    </lineage>
</organism>
<evidence type="ECO:0000250" key="1"/>
<evidence type="ECO:0000250" key="2">
    <source>
        <dbReference type="UniProtKB" id="Q786F3"/>
    </source>
</evidence>
<evidence type="ECO:0000255" key="3"/>
<evidence type="ECO:0000305" key="4"/>
<reference key="1">
    <citation type="journal article" date="1988" name="Virology">
        <title>Fusion glycoprotein (F) of rinderpest virus: entire nucleotide sequence of the F mRNA, and several features of the F protein.</title>
        <authorList>
            <person name="Tsukiyama K."/>
            <person name="Yoshikawa Y."/>
            <person name="Yamanouchi K."/>
        </authorList>
    </citation>
    <scope>NUCLEOTIDE SEQUENCE [GENOMIC RNA]</scope>
</reference>
<sequence length="546" mass="58911">MGILFAALLAMTNPHLATGQIHWGNLSKIGVVGTGSASYKVMTQSSHQSLVIKLMPNITAIDNCTKTEIMEYKRLLGTVLKPIREALNAITKNIKPIQSSTTSRRHKRFAGVVLAGAALGVATAAQITAGIALHQSMMNSQAIESLKASLETTNQAIEEIRQAGQEMVLAVQGVQDYINNELVPAMGQLSCEIVGQKLGLKLLRYYTEILSLFGPSLRDPVSAELSIQALSYALGGDINKILEKLGYSGSDLLAILESKGIKAKITYVDIESYFIVLSIAYPSLSEIKGVIVHRLESVSYNIGSQEWYTTVPRYVATQGYLISNFDDTPCAFTPEGTICSQNAIYPMSPLLQECFRGSTRSCARTLVLGSIGNRFILSKGNLIGNCASILCKCYTTGSIISQDPDKILTYIAADQCPVVEVGGVTIQVGSREYSDAVYLHEIDLGPPISLEKLDVGTNLWNAVTKLEKAKDLLDSSDLILENIKGVSVTNTGYILVGVGLIAVVGILIITCCCKKRRTDNKVSTMVLNPGLRPDLTGTSKSYVRSL</sequence>
<comment type="function">
    <text evidence="1">Class I viral fusion protein. Under the current model, the protein has at least 3 conformational states: pre-fusion native state, pre-hairpin intermediate state, and post-fusion hairpin state. During viral and plasma cell membrane fusion, the heptad repeat (HR) regions assume a trimer-of-hairpins structure, positioning the fusion peptide in close proximity to the C-terminal region of the ectodomain. The formation of this structure appears to drive apposition and subsequent fusion of viral and plasma cell membranes. Directs fusion of viral and cellular membranes leading to delivery of the nucleocapsid into the cytoplasm. This fusion is pH independent and occurs directly at the outer cell membrane. The trimer of F1-F2 (F protein) probably interacts with HN at the virion surface. Upon HN binding to its cellular receptor, the hydrophobic fusion peptide is unmasked and interacts with the cellular membrane, inducing the fusion between cell and virion membranes. Later in infection, F proteins expressed at the plasma membrane of infected cells could mediate fusion with adjacent cells to form syncytia, a cytopathic effect that could lead to tissue necrosis (By similarity).</text>
</comment>
<comment type="subunit">
    <text evidence="1">Homotrimer of disulfide-linked F1-F2.</text>
</comment>
<comment type="subcellular location">
    <subcellularLocation>
        <location evidence="1">Virion membrane</location>
        <topology evidence="1">Single-pass type I membrane protein</topology>
    </subcellularLocation>
    <subcellularLocation>
        <location evidence="1">Host cell membrane</location>
        <topology evidence="1">Single-pass membrane protein</topology>
    </subcellularLocation>
</comment>
<comment type="PTM">
    <text evidence="1">The inactive precursor F0 is glycosylated and proteolytically cleaved into F1 and F2 to be functionally active. The cleavage is mediated by cellular proteases during the transport and maturation of the polypeptide (By similarity).</text>
</comment>
<comment type="similarity">
    <text evidence="4">Belongs to the paramyxoviruses fusion glycoprotein family.</text>
</comment>
<accession>P10864</accession>
<name>FUS_RINDL</name>
<protein>
    <recommendedName>
        <fullName>Fusion glycoprotein F0</fullName>
    </recommendedName>
    <component>
        <recommendedName>
            <fullName>Fusion glycoprotein F2</fullName>
        </recommendedName>
    </component>
    <component>
        <recommendedName>
            <fullName>Fusion glycoprotein F1</fullName>
        </recommendedName>
    </component>
</protein>
<feature type="signal peptide" evidence="3">
    <location>
        <begin position="1"/>
        <end position="19"/>
    </location>
</feature>
<feature type="chain" id="PRO_0000039357" description="Fusion glycoprotein F0">
    <location>
        <begin position="20"/>
        <end position="546"/>
    </location>
</feature>
<feature type="chain" id="PRO_0000039358" description="Fusion glycoprotein F2">
    <location>
        <begin position="20"/>
        <end position="108"/>
    </location>
</feature>
<feature type="chain" id="PRO_0000039359" description="Fusion glycoprotein F1">
    <location>
        <begin position="109"/>
        <end position="546"/>
    </location>
</feature>
<feature type="topological domain" description="Extracellular" evidence="1">
    <location>
        <begin position="20"/>
        <end position="491"/>
    </location>
</feature>
<feature type="transmembrane region" description="Helical" evidence="1">
    <location>
        <begin position="492"/>
        <end position="512"/>
    </location>
</feature>
<feature type="topological domain" description="Cytoplasmic" evidence="1">
    <location>
        <begin position="513"/>
        <end position="546"/>
    </location>
</feature>
<feature type="region of interest" description="Fusion peptide" evidence="1">
    <location>
        <begin position="109"/>
        <end position="133"/>
    </location>
</feature>
<feature type="coiled-coil region" evidence="3">
    <location>
        <begin position="134"/>
        <end position="162"/>
    </location>
</feature>
<feature type="coiled-coil region" evidence="3">
    <location>
        <begin position="458"/>
        <end position="483"/>
    </location>
</feature>
<feature type="site" description="Cleavage; by host" evidence="1">
    <location>
        <begin position="108"/>
        <end position="109"/>
    </location>
</feature>
<feature type="glycosylation site" description="N-linked (GlcNAc...) asparagine; by host" evidence="2">
    <location>
        <position position="25"/>
    </location>
</feature>
<feature type="glycosylation site" description="N-linked (GlcNAc...) asparagine; by host" evidence="2">
    <location>
        <position position="57"/>
    </location>
</feature>
<feature type="glycosylation site" description="N-linked (GlcNAc...) asparagine; by host" evidence="3">
    <location>
        <position position="63"/>
    </location>
</feature>
<feature type="disulfide bond" description="Interchain (with C-195)" evidence="2">
    <location>
        <position position="64"/>
    </location>
</feature>
<feature type="disulfide bond" description="Interchain (with C-68)" evidence="2">
    <location>
        <position position="191"/>
    </location>
</feature>
<feature type="disulfide bond" evidence="2">
    <location>
        <begin position="330"/>
        <end position="339"/>
    </location>
</feature>
<feature type="disulfide bond" evidence="2">
    <location>
        <begin position="354"/>
        <end position="362"/>
    </location>
</feature>
<feature type="disulfide bond" evidence="2">
    <location>
        <begin position="386"/>
        <end position="391"/>
    </location>
</feature>
<feature type="disulfide bond" evidence="2">
    <location>
        <begin position="393"/>
        <end position="416"/>
    </location>
</feature>
<proteinExistence type="inferred from homology"/>